<dbReference type="EMBL" id="CP000046">
    <property type="protein sequence ID" value="AAW37602.1"/>
    <property type="status" value="ALT_INIT"/>
    <property type="molecule type" value="Genomic_DNA"/>
</dbReference>
<dbReference type="RefSeq" id="WP_023487099.1">
    <property type="nucleotide sequence ID" value="NC_002951.2"/>
</dbReference>
<dbReference type="SMR" id="Q5HIN6"/>
<dbReference type="KEGG" id="sac:SACOL0481"/>
<dbReference type="HOGENOM" id="CLU_071589_0_1_9"/>
<dbReference type="Proteomes" id="UP000000530">
    <property type="component" value="Chromosome"/>
</dbReference>
<dbReference type="GO" id="GO:0005886">
    <property type="term" value="C:plasma membrane"/>
    <property type="evidence" value="ECO:0007669"/>
    <property type="project" value="UniProtKB-SubCell"/>
</dbReference>
<dbReference type="Gene3D" id="2.50.20.40">
    <property type="match status" value="1"/>
</dbReference>
<dbReference type="InterPro" id="IPR007595">
    <property type="entry name" value="Csa"/>
</dbReference>
<dbReference type="InterPro" id="IPR038641">
    <property type="entry name" value="Csa_sf"/>
</dbReference>
<dbReference type="NCBIfam" id="TIGR01742">
    <property type="entry name" value="SA_tandem_lipo"/>
    <property type="match status" value="1"/>
</dbReference>
<dbReference type="Pfam" id="PF04507">
    <property type="entry name" value="DUF576"/>
    <property type="match status" value="1"/>
</dbReference>
<dbReference type="PROSITE" id="PS51257">
    <property type="entry name" value="PROKAR_LIPOPROTEIN"/>
    <property type="match status" value="1"/>
</dbReference>
<name>Y481_STAAC</name>
<sequence>MGYLKRFALYISVMILIFAIAGCGKGNETKEDSKEEQIKKSFAKTLDMYPIKNLEDLYDKEGYRDGEFKKGDKGMWTIYTDFAKGNKSDELDDEGMVLNLDRNTRTAKGYYFVKKFYEKDKLPDRKNYKVEMKNNKIILLDKVEDPNLKKRIENFKFFGQYANFKDLENYNNGDVSINWNVPSYDVEYKMSNKDENVKQLRSRYNIPTDKAPMLKMHIDGDLKGSSVGYKRLEIDFSKEGRDISVIDYLSYKPAKK</sequence>
<feature type="signal peptide" evidence="1">
    <location>
        <begin position="1"/>
        <end position="22"/>
    </location>
</feature>
<feature type="chain" id="PRO_0000282109" description="Uncharacterized lipoprotein SACOL0481">
    <location>
        <begin position="23"/>
        <end position="256"/>
    </location>
</feature>
<feature type="lipid moiety-binding region" description="N-palmitoyl cysteine" evidence="1">
    <location>
        <position position="23"/>
    </location>
</feature>
<feature type="lipid moiety-binding region" description="S-diacylglycerol cysteine" evidence="1">
    <location>
        <position position="23"/>
    </location>
</feature>
<keyword id="KW-1003">Cell membrane</keyword>
<keyword id="KW-0449">Lipoprotein</keyword>
<keyword id="KW-0472">Membrane</keyword>
<keyword id="KW-0564">Palmitate</keyword>
<keyword id="KW-0732">Signal</keyword>
<accession>Q5HIN6</accession>
<protein>
    <recommendedName>
        <fullName>Uncharacterized lipoprotein SACOL0481</fullName>
    </recommendedName>
</protein>
<gene>
    <name type="ordered locus">SACOL0481</name>
</gene>
<evidence type="ECO:0000255" key="1">
    <source>
        <dbReference type="PROSITE-ProRule" id="PRU00303"/>
    </source>
</evidence>
<evidence type="ECO:0000305" key="2"/>
<comment type="subcellular location">
    <subcellularLocation>
        <location evidence="1">Cell membrane</location>
        <topology evidence="1">Lipid-anchor</topology>
    </subcellularLocation>
</comment>
<comment type="similarity">
    <text evidence="2">Belongs to the staphylococcal tandem lipoprotein family.</text>
</comment>
<comment type="sequence caution" evidence="2">
    <conflict type="erroneous initiation">
        <sequence resource="EMBL-CDS" id="AAW37602"/>
    </conflict>
</comment>
<organism>
    <name type="scientific">Staphylococcus aureus (strain COL)</name>
    <dbReference type="NCBI Taxonomy" id="93062"/>
    <lineage>
        <taxon>Bacteria</taxon>
        <taxon>Bacillati</taxon>
        <taxon>Bacillota</taxon>
        <taxon>Bacilli</taxon>
        <taxon>Bacillales</taxon>
        <taxon>Staphylococcaceae</taxon>
        <taxon>Staphylococcus</taxon>
    </lineage>
</organism>
<proteinExistence type="inferred from homology"/>
<reference key="1">
    <citation type="journal article" date="2005" name="J. Bacteriol.">
        <title>Insights on evolution of virulence and resistance from the complete genome analysis of an early methicillin-resistant Staphylococcus aureus strain and a biofilm-producing methicillin-resistant Staphylococcus epidermidis strain.</title>
        <authorList>
            <person name="Gill S.R."/>
            <person name="Fouts D.E."/>
            <person name="Archer G.L."/>
            <person name="Mongodin E.F."/>
            <person name="DeBoy R.T."/>
            <person name="Ravel J."/>
            <person name="Paulsen I.T."/>
            <person name="Kolonay J.F."/>
            <person name="Brinkac L.M."/>
            <person name="Beanan M.J."/>
            <person name="Dodson R.J."/>
            <person name="Daugherty S.C."/>
            <person name="Madupu R."/>
            <person name="Angiuoli S.V."/>
            <person name="Durkin A.S."/>
            <person name="Haft D.H."/>
            <person name="Vamathevan J.J."/>
            <person name="Khouri H."/>
            <person name="Utterback T.R."/>
            <person name="Lee C."/>
            <person name="Dimitrov G."/>
            <person name="Jiang L."/>
            <person name="Qin H."/>
            <person name="Weidman J."/>
            <person name="Tran K."/>
            <person name="Kang K.H."/>
            <person name="Hance I.R."/>
            <person name="Nelson K.E."/>
            <person name="Fraser C.M."/>
        </authorList>
    </citation>
    <scope>NUCLEOTIDE SEQUENCE [LARGE SCALE GENOMIC DNA]</scope>
    <source>
        <strain>COL</strain>
    </source>
</reference>